<protein>
    <recommendedName>
        <fullName evidence="2">Elongation factor 1-alpha</fullName>
        <shortName evidence="2">EF-1-alpha</shortName>
        <ecNumber evidence="2">3.6.5.3</ecNumber>
    </recommendedName>
    <alternativeName>
        <fullName evidence="2">Elongation factor Tu</fullName>
        <shortName evidence="2">EF-Tu</shortName>
    </alternativeName>
</protein>
<sequence length="426" mass="47028">MANDKPHMNLAVIGHIDHGKSTTVGRLMFETGAVPAHIIENFRKEAESKGKGSFEFAWVMDNLKEERERGITIDIAHKRFDTAKFYFTVVDCPGHRDFVKNMITGASQADAAILVVAAPDGVMEQTKEHVFLARTLGITQLVIAINKMDAVNYDQKRFEEVKKELTQLIGMVGYKAAEILFIPMSSFKGVNISKKSPETPWYTGPTLLEALDTFKEPDKPTDKPFRLPIQDVYSISGIGTVPVGRIETGIMKKGMKVSFMPANKDGEIKSIEMHHEEQPQALPGDNVGFNVRGVGKNDIRRGDVCGPADIPPTVADEFTAQIVVLQHPSAITVGYTPVFHCHTAQIACTFVELRKKLDPRSGQTKEENPTFLKSGDAAIVQIKPSRPMVIESVKEIPQLGRFAIRDMGTTIAAGMCIAVQPKQMIR</sequence>
<gene>
    <name evidence="2" type="primary">tuf</name>
    <name type="ordered locus">Mpal_1553</name>
</gene>
<feature type="chain" id="PRO_1000201421" description="Elongation factor 1-alpha">
    <location>
        <begin position="1"/>
        <end position="426"/>
    </location>
</feature>
<feature type="domain" description="tr-type G">
    <location>
        <begin position="5"/>
        <end position="221"/>
    </location>
</feature>
<feature type="region of interest" description="G1" evidence="1">
    <location>
        <begin position="14"/>
        <end position="21"/>
    </location>
</feature>
<feature type="region of interest" description="G2" evidence="1">
    <location>
        <begin position="70"/>
        <end position="74"/>
    </location>
</feature>
<feature type="region of interest" description="G3" evidence="1">
    <location>
        <begin position="91"/>
        <end position="94"/>
    </location>
</feature>
<feature type="region of interest" description="G4" evidence="1">
    <location>
        <begin position="146"/>
        <end position="149"/>
    </location>
</feature>
<feature type="region of interest" description="G5" evidence="1">
    <location>
        <begin position="185"/>
        <end position="187"/>
    </location>
</feature>
<feature type="binding site" evidence="2">
    <location>
        <begin position="14"/>
        <end position="21"/>
    </location>
    <ligand>
        <name>GTP</name>
        <dbReference type="ChEBI" id="CHEBI:37565"/>
    </ligand>
</feature>
<feature type="binding site" evidence="2">
    <location>
        <position position="21"/>
    </location>
    <ligand>
        <name>Mg(2+)</name>
        <dbReference type="ChEBI" id="CHEBI:18420"/>
    </ligand>
</feature>
<feature type="binding site" evidence="2">
    <location>
        <begin position="91"/>
        <end position="95"/>
    </location>
    <ligand>
        <name>GTP</name>
        <dbReference type="ChEBI" id="CHEBI:37565"/>
    </ligand>
</feature>
<feature type="binding site" evidence="2">
    <location>
        <begin position="146"/>
        <end position="149"/>
    </location>
    <ligand>
        <name>GTP</name>
        <dbReference type="ChEBI" id="CHEBI:37565"/>
    </ligand>
</feature>
<keyword id="KW-0963">Cytoplasm</keyword>
<keyword id="KW-0251">Elongation factor</keyword>
<keyword id="KW-0342">GTP-binding</keyword>
<keyword id="KW-0378">Hydrolase</keyword>
<keyword id="KW-0460">Magnesium</keyword>
<keyword id="KW-0479">Metal-binding</keyword>
<keyword id="KW-0547">Nucleotide-binding</keyword>
<keyword id="KW-0648">Protein biosynthesis</keyword>
<keyword id="KW-1185">Reference proteome</keyword>
<comment type="function">
    <text evidence="2">GTP hydrolase that promotes the GTP-dependent binding of aminoacyl-tRNA to the A-site of ribosomes during protein biosynthesis.</text>
</comment>
<comment type="catalytic activity">
    <reaction evidence="2">
        <text>GTP + H2O = GDP + phosphate + H(+)</text>
        <dbReference type="Rhea" id="RHEA:19669"/>
        <dbReference type="ChEBI" id="CHEBI:15377"/>
        <dbReference type="ChEBI" id="CHEBI:15378"/>
        <dbReference type="ChEBI" id="CHEBI:37565"/>
        <dbReference type="ChEBI" id="CHEBI:43474"/>
        <dbReference type="ChEBI" id="CHEBI:58189"/>
        <dbReference type="EC" id="3.6.5.3"/>
    </reaction>
    <physiologicalReaction direction="left-to-right" evidence="2">
        <dbReference type="Rhea" id="RHEA:19670"/>
    </physiologicalReaction>
</comment>
<comment type="subcellular location">
    <subcellularLocation>
        <location evidence="2">Cytoplasm</location>
    </subcellularLocation>
</comment>
<comment type="similarity">
    <text evidence="2">Belongs to the TRAFAC class translation factor GTPase superfamily. Classic translation factor GTPase family. EF-Tu/EF-1A subfamily.</text>
</comment>
<dbReference type="EC" id="3.6.5.3" evidence="2"/>
<dbReference type="EMBL" id="CP001338">
    <property type="protein sequence ID" value="ACL16866.1"/>
    <property type="molecule type" value="Genomic_DNA"/>
</dbReference>
<dbReference type="RefSeq" id="WP_012618185.1">
    <property type="nucleotide sequence ID" value="NC_011832.1"/>
</dbReference>
<dbReference type="SMR" id="B8GIQ3"/>
<dbReference type="STRING" id="521011.Mpal_1553"/>
<dbReference type="GeneID" id="7271098"/>
<dbReference type="KEGG" id="mpl:Mpal_1553"/>
<dbReference type="eggNOG" id="arCOG01561">
    <property type="taxonomic scope" value="Archaea"/>
</dbReference>
<dbReference type="HOGENOM" id="CLU_007265_3_5_2"/>
<dbReference type="OrthoDB" id="371718at2157"/>
<dbReference type="Proteomes" id="UP000002457">
    <property type="component" value="Chromosome"/>
</dbReference>
<dbReference type="GO" id="GO:0005737">
    <property type="term" value="C:cytoplasm"/>
    <property type="evidence" value="ECO:0007669"/>
    <property type="project" value="UniProtKB-SubCell"/>
</dbReference>
<dbReference type="GO" id="GO:0005525">
    <property type="term" value="F:GTP binding"/>
    <property type="evidence" value="ECO:0007669"/>
    <property type="project" value="UniProtKB-UniRule"/>
</dbReference>
<dbReference type="GO" id="GO:0003924">
    <property type="term" value="F:GTPase activity"/>
    <property type="evidence" value="ECO:0007669"/>
    <property type="project" value="InterPro"/>
</dbReference>
<dbReference type="GO" id="GO:0003746">
    <property type="term" value="F:translation elongation factor activity"/>
    <property type="evidence" value="ECO:0007669"/>
    <property type="project" value="UniProtKB-UniRule"/>
</dbReference>
<dbReference type="CDD" id="cd01883">
    <property type="entry name" value="EF1_alpha"/>
    <property type="match status" value="1"/>
</dbReference>
<dbReference type="CDD" id="cd03693">
    <property type="entry name" value="EF1_alpha_II"/>
    <property type="match status" value="1"/>
</dbReference>
<dbReference type="CDD" id="cd03705">
    <property type="entry name" value="EF1_alpha_III"/>
    <property type="match status" value="1"/>
</dbReference>
<dbReference type="FunFam" id="2.40.30.10:FF:000003">
    <property type="entry name" value="Elongation factor 1-alpha"/>
    <property type="match status" value="1"/>
</dbReference>
<dbReference type="FunFam" id="2.40.30.10:FF:000005">
    <property type="entry name" value="Elongation factor 1-alpha"/>
    <property type="match status" value="1"/>
</dbReference>
<dbReference type="FunFam" id="3.40.50.300:FF:000204">
    <property type="entry name" value="Translation elongation factor Tu"/>
    <property type="match status" value="1"/>
</dbReference>
<dbReference type="Gene3D" id="3.40.50.300">
    <property type="entry name" value="P-loop containing nucleotide triphosphate hydrolases"/>
    <property type="match status" value="1"/>
</dbReference>
<dbReference type="Gene3D" id="2.40.30.10">
    <property type="entry name" value="Translation factors"/>
    <property type="match status" value="2"/>
</dbReference>
<dbReference type="HAMAP" id="MF_00118_A">
    <property type="entry name" value="EF_Tu_A"/>
    <property type="match status" value="1"/>
</dbReference>
<dbReference type="InterPro" id="IPR004161">
    <property type="entry name" value="EFTu-like_2"/>
</dbReference>
<dbReference type="InterPro" id="IPR031157">
    <property type="entry name" value="G_TR_CS"/>
</dbReference>
<dbReference type="InterPro" id="IPR054696">
    <property type="entry name" value="GTP-eEF1A_C"/>
</dbReference>
<dbReference type="InterPro" id="IPR027417">
    <property type="entry name" value="P-loop_NTPase"/>
</dbReference>
<dbReference type="InterPro" id="IPR005225">
    <property type="entry name" value="Small_GTP-bd"/>
</dbReference>
<dbReference type="InterPro" id="IPR000795">
    <property type="entry name" value="T_Tr_GTP-bd_dom"/>
</dbReference>
<dbReference type="InterPro" id="IPR050100">
    <property type="entry name" value="TRAFAC_GTPase_members"/>
</dbReference>
<dbReference type="InterPro" id="IPR009000">
    <property type="entry name" value="Transl_B-barrel_sf"/>
</dbReference>
<dbReference type="InterPro" id="IPR009001">
    <property type="entry name" value="Transl_elong_EF1A/Init_IF2_C"/>
</dbReference>
<dbReference type="InterPro" id="IPR004539">
    <property type="entry name" value="Transl_elong_EF1A_euk/arc"/>
</dbReference>
<dbReference type="NCBIfam" id="TIGR00483">
    <property type="entry name" value="EF-1_alpha"/>
    <property type="match status" value="1"/>
</dbReference>
<dbReference type="NCBIfam" id="NF008969">
    <property type="entry name" value="PRK12317.1"/>
    <property type="match status" value="1"/>
</dbReference>
<dbReference type="NCBIfam" id="TIGR00231">
    <property type="entry name" value="small_GTP"/>
    <property type="match status" value="1"/>
</dbReference>
<dbReference type="PANTHER" id="PTHR23115">
    <property type="entry name" value="TRANSLATION FACTOR"/>
    <property type="match status" value="1"/>
</dbReference>
<dbReference type="Pfam" id="PF22594">
    <property type="entry name" value="GTP-eEF1A_C"/>
    <property type="match status" value="1"/>
</dbReference>
<dbReference type="Pfam" id="PF00009">
    <property type="entry name" value="GTP_EFTU"/>
    <property type="match status" value="1"/>
</dbReference>
<dbReference type="Pfam" id="PF03144">
    <property type="entry name" value="GTP_EFTU_D2"/>
    <property type="match status" value="1"/>
</dbReference>
<dbReference type="PRINTS" id="PR00315">
    <property type="entry name" value="ELONGATNFCT"/>
</dbReference>
<dbReference type="SUPFAM" id="SSF50465">
    <property type="entry name" value="EF-Tu/eEF-1alpha/eIF2-gamma C-terminal domain"/>
    <property type="match status" value="1"/>
</dbReference>
<dbReference type="SUPFAM" id="SSF52540">
    <property type="entry name" value="P-loop containing nucleoside triphosphate hydrolases"/>
    <property type="match status" value="1"/>
</dbReference>
<dbReference type="SUPFAM" id="SSF50447">
    <property type="entry name" value="Translation proteins"/>
    <property type="match status" value="1"/>
</dbReference>
<dbReference type="PROSITE" id="PS00301">
    <property type="entry name" value="G_TR_1"/>
    <property type="match status" value="1"/>
</dbReference>
<dbReference type="PROSITE" id="PS51722">
    <property type="entry name" value="G_TR_2"/>
    <property type="match status" value="1"/>
</dbReference>
<evidence type="ECO:0000250" key="1"/>
<evidence type="ECO:0000255" key="2">
    <source>
        <dbReference type="HAMAP-Rule" id="MF_00118"/>
    </source>
</evidence>
<accession>B8GIQ3</accession>
<organism>
    <name type="scientific">Methanosphaerula palustris (strain ATCC BAA-1556 / DSM 19958 / E1-9c)</name>
    <dbReference type="NCBI Taxonomy" id="521011"/>
    <lineage>
        <taxon>Archaea</taxon>
        <taxon>Methanobacteriati</taxon>
        <taxon>Methanobacteriota</taxon>
        <taxon>Stenosarchaea group</taxon>
        <taxon>Methanomicrobia</taxon>
        <taxon>Methanomicrobiales</taxon>
        <taxon>Methanoregulaceae</taxon>
        <taxon>Methanosphaerula</taxon>
    </lineage>
</organism>
<proteinExistence type="inferred from homology"/>
<name>EF1A_METPE</name>
<reference key="1">
    <citation type="journal article" date="2015" name="Genome Announc.">
        <title>Complete Genome Sequence of Methanosphaerula palustris E1-9CT, a Hydrogenotrophic Methanogen Isolated from a Minerotrophic Fen Peatland.</title>
        <authorList>
            <person name="Cadillo-Quiroz H."/>
            <person name="Browne P."/>
            <person name="Kyrpides N."/>
            <person name="Woyke T."/>
            <person name="Goodwin L."/>
            <person name="Detter C."/>
            <person name="Yavitt J.B."/>
            <person name="Zinder S.H."/>
        </authorList>
    </citation>
    <scope>NUCLEOTIDE SEQUENCE [LARGE SCALE GENOMIC DNA]</scope>
    <source>
        <strain>ATCC BAA-1556 / DSM 19958 / E1-9c</strain>
    </source>
</reference>